<organism>
    <name type="scientific">Bacillus cereus (strain ATCC 10987 / NRS 248)</name>
    <dbReference type="NCBI Taxonomy" id="222523"/>
    <lineage>
        <taxon>Bacteria</taxon>
        <taxon>Bacillati</taxon>
        <taxon>Bacillota</taxon>
        <taxon>Bacilli</taxon>
        <taxon>Bacillales</taxon>
        <taxon>Bacillaceae</taxon>
        <taxon>Bacillus</taxon>
        <taxon>Bacillus cereus group</taxon>
    </lineage>
</organism>
<proteinExistence type="inferred from homology"/>
<gene>
    <name evidence="1" type="primary">rplX</name>
    <name type="ordered locus">BCE_0121</name>
</gene>
<name>RL24_BACC1</name>
<reference key="1">
    <citation type="journal article" date="2004" name="Nucleic Acids Res.">
        <title>The genome sequence of Bacillus cereus ATCC 10987 reveals metabolic adaptations and a large plasmid related to Bacillus anthracis pXO1.</title>
        <authorList>
            <person name="Rasko D.A."/>
            <person name="Ravel J."/>
            <person name="Oekstad O.A."/>
            <person name="Helgason E."/>
            <person name="Cer R.Z."/>
            <person name="Jiang L."/>
            <person name="Shores K.A."/>
            <person name="Fouts D.E."/>
            <person name="Tourasse N.J."/>
            <person name="Angiuoli S.V."/>
            <person name="Kolonay J.F."/>
            <person name="Nelson W.C."/>
            <person name="Kolstoe A.-B."/>
            <person name="Fraser C.M."/>
            <person name="Read T.D."/>
        </authorList>
    </citation>
    <scope>NUCLEOTIDE SEQUENCE [LARGE SCALE GENOMIC DNA]</scope>
    <source>
        <strain>ATCC 10987 / NRS 248</strain>
    </source>
</reference>
<keyword id="KW-0687">Ribonucleoprotein</keyword>
<keyword id="KW-0689">Ribosomal protein</keyword>
<keyword id="KW-0694">RNA-binding</keyword>
<keyword id="KW-0699">rRNA-binding</keyword>
<evidence type="ECO:0000255" key="1">
    <source>
        <dbReference type="HAMAP-Rule" id="MF_01326"/>
    </source>
</evidence>
<evidence type="ECO:0000305" key="2"/>
<comment type="function">
    <text evidence="1">One of two assembly initiator proteins, it binds directly to the 5'-end of the 23S rRNA, where it nucleates assembly of the 50S subunit.</text>
</comment>
<comment type="function">
    <text evidence="1">One of the proteins that surrounds the polypeptide exit tunnel on the outside of the subunit.</text>
</comment>
<comment type="subunit">
    <text evidence="1">Part of the 50S ribosomal subunit.</text>
</comment>
<comment type="similarity">
    <text evidence="1">Belongs to the universal ribosomal protein uL24 family.</text>
</comment>
<accession>Q73F85</accession>
<sequence>MHVKKGDKVQVITGKDKGKQGVILVAFPKQNRVIVEGVNIVKKHSKPSQLNPQGGIITKEAPIHVSNVMILDPKTGEPTRVGFKVEDGKKVRIAKKSGELLDK</sequence>
<protein>
    <recommendedName>
        <fullName evidence="1">Large ribosomal subunit protein uL24</fullName>
    </recommendedName>
    <alternativeName>
        <fullName evidence="2">50S ribosomal protein L24</fullName>
    </alternativeName>
</protein>
<dbReference type="EMBL" id="AE017194">
    <property type="protein sequence ID" value="AAS39057.1"/>
    <property type="molecule type" value="Genomic_DNA"/>
</dbReference>
<dbReference type="SMR" id="Q73F85"/>
<dbReference type="KEGG" id="bca:BCE_0121"/>
<dbReference type="HOGENOM" id="CLU_093315_2_0_9"/>
<dbReference type="Proteomes" id="UP000002527">
    <property type="component" value="Chromosome"/>
</dbReference>
<dbReference type="GO" id="GO:1990904">
    <property type="term" value="C:ribonucleoprotein complex"/>
    <property type="evidence" value="ECO:0007669"/>
    <property type="project" value="UniProtKB-KW"/>
</dbReference>
<dbReference type="GO" id="GO:0005840">
    <property type="term" value="C:ribosome"/>
    <property type="evidence" value="ECO:0007669"/>
    <property type="project" value="UniProtKB-KW"/>
</dbReference>
<dbReference type="GO" id="GO:0019843">
    <property type="term" value="F:rRNA binding"/>
    <property type="evidence" value="ECO:0007669"/>
    <property type="project" value="UniProtKB-UniRule"/>
</dbReference>
<dbReference type="GO" id="GO:0003735">
    <property type="term" value="F:structural constituent of ribosome"/>
    <property type="evidence" value="ECO:0007669"/>
    <property type="project" value="InterPro"/>
</dbReference>
<dbReference type="GO" id="GO:0006412">
    <property type="term" value="P:translation"/>
    <property type="evidence" value="ECO:0007669"/>
    <property type="project" value="UniProtKB-UniRule"/>
</dbReference>
<dbReference type="CDD" id="cd06089">
    <property type="entry name" value="KOW_RPL26"/>
    <property type="match status" value="1"/>
</dbReference>
<dbReference type="FunFam" id="2.30.30.30:FF:000004">
    <property type="entry name" value="50S ribosomal protein L24"/>
    <property type="match status" value="1"/>
</dbReference>
<dbReference type="Gene3D" id="2.30.30.30">
    <property type="match status" value="1"/>
</dbReference>
<dbReference type="HAMAP" id="MF_01326_B">
    <property type="entry name" value="Ribosomal_uL24_B"/>
    <property type="match status" value="1"/>
</dbReference>
<dbReference type="InterPro" id="IPR005824">
    <property type="entry name" value="KOW"/>
</dbReference>
<dbReference type="InterPro" id="IPR014722">
    <property type="entry name" value="Rib_uL2_dom2"/>
</dbReference>
<dbReference type="InterPro" id="IPR003256">
    <property type="entry name" value="Ribosomal_uL24"/>
</dbReference>
<dbReference type="InterPro" id="IPR005825">
    <property type="entry name" value="Ribosomal_uL24_CS"/>
</dbReference>
<dbReference type="InterPro" id="IPR041988">
    <property type="entry name" value="Ribosomal_uL24_KOW"/>
</dbReference>
<dbReference type="InterPro" id="IPR008991">
    <property type="entry name" value="Translation_prot_SH3-like_sf"/>
</dbReference>
<dbReference type="NCBIfam" id="TIGR01079">
    <property type="entry name" value="rplX_bact"/>
    <property type="match status" value="1"/>
</dbReference>
<dbReference type="PANTHER" id="PTHR12903">
    <property type="entry name" value="MITOCHONDRIAL RIBOSOMAL PROTEIN L24"/>
    <property type="match status" value="1"/>
</dbReference>
<dbReference type="Pfam" id="PF00467">
    <property type="entry name" value="KOW"/>
    <property type="match status" value="1"/>
</dbReference>
<dbReference type="Pfam" id="PF17136">
    <property type="entry name" value="ribosomal_L24"/>
    <property type="match status" value="1"/>
</dbReference>
<dbReference type="SMART" id="SM00739">
    <property type="entry name" value="KOW"/>
    <property type="match status" value="1"/>
</dbReference>
<dbReference type="SUPFAM" id="SSF50104">
    <property type="entry name" value="Translation proteins SH3-like domain"/>
    <property type="match status" value="1"/>
</dbReference>
<dbReference type="PROSITE" id="PS01108">
    <property type="entry name" value="RIBOSOMAL_L24"/>
    <property type="match status" value="1"/>
</dbReference>
<feature type="chain" id="PRO_0000241562" description="Large ribosomal subunit protein uL24">
    <location>
        <begin position="1"/>
        <end position="103"/>
    </location>
</feature>